<dbReference type="EC" id="2.7.13.3"/>
<dbReference type="EMBL" id="AF141929">
    <property type="protein sequence ID" value="AAD37577.1"/>
    <property type="molecule type" value="mRNA"/>
</dbReference>
<dbReference type="SMR" id="Q9XH57"/>
<dbReference type="BRENDA" id="2.7.13.3">
    <property type="organism ID" value="4583"/>
</dbReference>
<dbReference type="GO" id="GO:0005789">
    <property type="term" value="C:endoplasmic reticulum membrane"/>
    <property type="evidence" value="ECO:0007669"/>
    <property type="project" value="UniProtKB-SubCell"/>
</dbReference>
<dbReference type="GO" id="GO:0005524">
    <property type="term" value="F:ATP binding"/>
    <property type="evidence" value="ECO:0007669"/>
    <property type="project" value="UniProtKB-KW"/>
</dbReference>
<dbReference type="GO" id="GO:0051740">
    <property type="term" value="F:ethylene binding"/>
    <property type="evidence" value="ECO:0007669"/>
    <property type="project" value="InterPro"/>
</dbReference>
<dbReference type="GO" id="GO:0038199">
    <property type="term" value="F:ethylene receptor activity"/>
    <property type="evidence" value="ECO:0007669"/>
    <property type="project" value="InterPro"/>
</dbReference>
<dbReference type="GO" id="GO:0046872">
    <property type="term" value="F:metal ion binding"/>
    <property type="evidence" value="ECO:0007669"/>
    <property type="project" value="UniProtKB-KW"/>
</dbReference>
<dbReference type="GO" id="GO:0000155">
    <property type="term" value="F:phosphorelay sensor kinase activity"/>
    <property type="evidence" value="ECO:0007669"/>
    <property type="project" value="InterPro"/>
</dbReference>
<dbReference type="GO" id="GO:0010105">
    <property type="term" value="P:negative regulation of ethylene-activated signaling pathway"/>
    <property type="evidence" value="ECO:0007669"/>
    <property type="project" value="UniProtKB-ARBA"/>
</dbReference>
<dbReference type="CDD" id="cd16922">
    <property type="entry name" value="HATPase_EvgS-ArcB-TorS-like"/>
    <property type="match status" value="1"/>
</dbReference>
<dbReference type="CDD" id="cd00082">
    <property type="entry name" value="HisKA"/>
    <property type="match status" value="1"/>
</dbReference>
<dbReference type="CDD" id="cd19933">
    <property type="entry name" value="REC_ETR-like"/>
    <property type="match status" value="1"/>
</dbReference>
<dbReference type="FunFam" id="3.40.50.2300:FF:000192">
    <property type="entry name" value="Ethylene receptor"/>
    <property type="match status" value="1"/>
</dbReference>
<dbReference type="FunFam" id="1.10.287.130:FF:000004">
    <property type="entry name" value="Ethylene receptor 1"/>
    <property type="match status" value="1"/>
</dbReference>
<dbReference type="FunFam" id="3.30.565.10:FF:000030">
    <property type="entry name" value="Ethylene receptor 1"/>
    <property type="match status" value="1"/>
</dbReference>
<dbReference type="FunFam" id="3.30.450.40:FF:000026">
    <property type="entry name" value="Ethylene response sensor"/>
    <property type="match status" value="1"/>
</dbReference>
<dbReference type="Gene3D" id="1.10.287.130">
    <property type="match status" value="1"/>
</dbReference>
<dbReference type="Gene3D" id="3.30.450.40">
    <property type="match status" value="1"/>
</dbReference>
<dbReference type="Gene3D" id="3.40.50.2300">
    <property type="match status" value="1"/>
</dbReference>
<dbReference type="Gene3D" id="3.30.565.10">
    <property type="entry name" value="Histidine kinase-like ATPase, C-terminal domain"/>
    <property type="match status" value="1"/>
</dbReference>
<dbReference type="InterPro" id="IPR011006">
    <property type="entry name" value="CheY-like_superfamily"/>
</dbReference>
<dbReference type="InterPro" id="IPR014525">
    <property type="entry name" value="ETR"/>
</dbReference>
<dbReference type="InterPro" id="IPR003018">
    <property type="entry name" value="GAF"/>
</dbReference>
<dbReference type="InterPro" id="IPR029016">
    <property type="entry name" value="GAF-like_dom_sf"/>
</dbReference>
<dbReference type="InterPro" id="IPR036890">
    <property type="entry name" value="HATPase_C_sf"/>
</dbReference>
<dbReference type="InterPro" id="IPR005467">
    <property type="entry name" value="His_kinase_dom"/>
</dbReference>
<dbReference type="InterPro" id="IPR003661">
    <property type="entry name" value="HisK_dim/P_dom"/>
</dbReference>
<dbReference type="InterPro" id="IPR036097">
    <property type="entry name" value="HisK_dim/P_sf"/>
</dbReference>
<dbReference type="InterPro" id="IPR004358">
    <property type="entry name" value="Sig_transdc_His_kin-like_C"/>
</dbReference>
<dbReference type="InterPro" id="IPR001789">
    <property type="entry name" value="Sig_transdc_resp-reg_receiver"/>
</dbReference>
<dbReference type="PANTHER" id="PTHR24423:SF615">
    <property type="entry name" value="ETHYLENE RECEPTOR 1"/>
    <property type="match status" value="1"/>
</dbReference>
<dbReference type="PANTHER" id="PTHR24423">
    <property type="entry name" value="TWO-COMPONENT SENSOR HISTIDINE KINASE"/>
    <property type="match status" value="1"/>
</dbReference>
<dbReference type="Pfam" id="PF25487">
    <property type="entry name" value="ETR1_N"/>
    <property type="match status" value="1"/>
</dbReference>
<dbReference type="Pfam" id="PF01590">
    <property type="entry name" value="GAF"/>
    <property type="match status" value="1"/>
</dbReference>
<dbReference type="Pfam" id="PF02518">
    <property type="entry name" value="HATPase_c"/>
    <property type="match status" value="1"/>
</dbReference>
<dbReference type="Pfam" id="PF00512">
    <property type="entry name" value="HisKA"/>
    <property type="match status" value="1"/>
</dbReference>
<dbReference type="Pfam" id="PF00072">
    <property type="entry name" value="Response_reg"/>
    <property type="match status" value="1"/>
</dbReference>
<dbReference type="PIRSF" id="PIRSF026389">
    <property type="entry name" value="Ethyln_sen_HK"/>
    <property type="match status" value="1"/>
</dbReference>
<dbReference type="PRINTS" id="PR00344">
    <property type="entry name" value="BCTRLSENSOR"/>
</dbReference>
<dbReference type="SMART" id="SM00065">
    <property type="entry name" value="GAF"/>
    <property type="match status" value="1"/>
</dbReference>
<dbReference type="SMART" id="SM00387">
    <property type="entry name" value="HATPase_c"/>
    <property type="match status" value="1"/>
</dbReference>
<dbReference type="SMART" id="SM00388">
    <property type="entry name" value="HisKA"/>
    <property type="match status" value="1"/>
</dbReference>
<dbReference type="SMART" id="SM00448">
    <property type="entry name" value="REC"/>
    <property type="match status" value="1"/>
</dbReference>
<dbReference type="SUPFAM" id="SSF55874">
    <property type="entry name" value="ATPase domain of HSP90 chaperone/DNA topoisomerase II/histidine kinase"/>
    <property type="match status" value="1"/>
</dbReference>
<dbReference type="SUPFAM" id="SSF52172">
    <property type="entry name" value="CheY-like"/>
    <property type="match status" value="1"/>
</dbReference>
<dbReference type="SUPFAM" id="SSF55781">
    <property type="entry name" value="GAF domain-like"/>
    <property type="match status" value="1"/>
</dbReference>
<dbReference type="SUPFAM" id="SSF47384">
    <property type="entry name" value="Homodimeric domain of signal transducing histidine kinase"/>
    <property type="match status" value="1"/>
</dbReference>
<dbReference type="PROSITE" id="PS50109">
    <property type="entry name" value="HIS_KIN"/>
    <property type="match status" value="1"/>
</dbReference>
<dbReference type="PROSITE" id="PS50110">
    <property type="entry name" value="RESPONSE_REGULATORY"/>
    <property type="match status" value="1"/>
</dbReference>
<organism>
    <name type="scientific">Pelargonium hortorum</name>
    <name type="common">Common geranium</name>
    <name type="synonym">Pelargonium inquinans x Pelargonium zonale</name>
    <dbReference type="NCBI Taxonomy" id="4031"/>
    <lineage>
        <taxon>Eukaryota</taxon>
        <taxon>Viridiplantae</taxon>
        <taxon>Streptophyta</taxon>
        <taxon>Embryophyta</taxon>
        <taxon>Tracheophyta</taxon>
        <taxon>Spermatophyta</taxon>
        <taxon>Magnoliopsida</taxon>
        <taxon>eudicotyledons</taxon>
        <taxon>Gunneridae</taxon>
        <taxon>Pentapetalae</taxon>
        <taxon>rosids</taxon>
        <taxon>malvids</taxon>
        <taxon>Geraniales</taxon>
        <taxon>Geraniaceae</taxon>
        <taxon>Pelargonium</taxon>
    </lineage>
</organism>
<proteinExistence type="evidence at transcript level"/>
<sequence>MESCNCIEPQWPADELLMKYQYISDFFIAIAYFSIPLELIYFVKKSAVFPYRWVLVQFGAFIVLCGATHLINLWTFNMHSKTVEIVMTTAKIMTAVVSCATALMLVHIIPDLLSVKTRELFLKNKAAELDREMGLIRTQEETGRHVRMLTHEIRSTLDRHTILKTTLVELGRTLALEECALWMPTRTGLELQLSYTLRQQNPVGFTVPIHLPVINQVFSSNHAIKISPNSPIARLRPIAGKYMPGEVVGVRVPLLHLSNFQINDWPELSTKRYALMVLMLPSDSARQWHVHELELVEVVADQVAVALSHAAILEESMRARDLLMEQNVALDMARREAETAIRARNDFLAVMNHEMRTPMHAIIALSSLLQETELTPEQRLMVETVLKSSNLLATLINDVLDLSRLEDGSLQLDIGTFNLHALLREVHNLIKPIASVKKLCISLNVATDLPEYAVGDEKRLVQIILNVVGNAVKFSKEGNISITAFVAKSESLRDPRAPDFFPICGENQFYLRVQVKDSGLGINPQDIPRLFTKFAQTQPVATKNSGGSGLGLAICKRFVNLMEGHIWIDSEGPGKGCTATFVVKLGIPERSSEPKLLLMPKVPANHGQTNFSGLKVLLLDDNGVSRAVTRGLLAHLGCDVTTVSSSDELLRVVSQDYKVVFMDVCMPEVDGFEIAVRIHEKFMTRHERPLIVALTGNIDQVTKDNCTRVGMEGVVLKPVSIDKMRNVLSNLLEHRVLFEAI</sequence>
<comment type="function">
    <text evidence="1">May act early in the ethylene signal transduction pathway, possibly as an ethylene receptor, or as a regulator of the pathway.</text>
</comment>
<comment type="catalytic activity">
    <reaction>
        <text>ATP + protein L-histidine = ADP + protein N-phospho-L-histidine.</text>
        <dbReference type="EC" id="2.7.13.3"/>
    </reaction>
</comment>
<comment type="cofactor">
    <cofactor evidence="1">
        <name>Cu cation</name>
        <dbReference type="ChEBI" id="CHEBI:23378"/>
    </cofactor>
    <text evidence="1">Binds 1 copper ion per dimer.</text>
</comment>
<comment type="subunit">
    <text evidence="1">Homodimer; disulfide-linked.</text>
</comment>
<comment type="subcellular location">
    <subcellularLocation>
        <location evidence="1">Endoplasmic reticulum membrane</location>
        <topology evidence="1">Multi-pass membrane protein</topology>
    </subcellularLocation>
</comment>
<comment type="developmental stage">
    <text>Constant expression throughout floral development.</text>
</comment>
<comment type="induction">
    <text>Not induced by ethylene.</text>
</comment>
<comment type="PTM">
    <text evidence="1">Activation probably requires a transfer of a phosphate group between a His in the transmitter domain and an Asp of the receiver domain.</text>
</comment>
<comment type="similarity">
    <text evidence="5">Belongs to the ethylene receptor family.</text>
</comment>
<gene>
    <name type="primary">ETR2</name>
</gene>
<accession>Q9XH57</accession>
<protein>
    <recommendedName>
        <fullName>Ethylene receptor 2</fullName>
        <ecNumber>2.7.13.3</ecNumber>
    </recommendedName>
    <alternativeName>
        <fullName>PhETR2</fullName>
    </alternativeName>
</protein>
<name>ETR2_PELHO</name>
<keyword id="KW-0067">ATP-binding</keyword>
<keyword id="KW-0186">Copper</keyword>
<keyword id="KW-1015">Disulfide bond</keyword>
<keyword id="KW-0256">Endoplasmic reticulum</keyword>
<keyword id="KW-0936">Ethylene signaling pathway</keyword>
<keyword id="KW-0418">Kinase</keyword>
<keyword id="KW-0472">Membrane</keyword>
<keyword id="KW-0479">Metal-binding</keyword>
<keyword id="KW-0547">Nucleotide-binding</keyword>
<keyword id="KW-0597">Phosphoprotein</keyword>
<keyword id="KW-0675">Receptor</keyword>
<keyword id="KW-0808">Transferase</keyword>
<keyword id="KW-0812">Transmembrane</keyword>
<keyword id="KW-1133">Transmembrane helix</keyword>
<keyword id="KW-0902">Two-component regulatory system</keyword>
<reference key="1">
    <citation type="journal article" date="2000" name="Plant Mol. Biol.">
        <title>Effect of pollination and exogenous ethylene on accumulation of ETR1 homologue transcripts during flower petal abscission in geranium (Pelargonium x hortorum L.H. Bailey).</title>
        <authorList>
            <person name="Dervinis C."/>
            <person name="Clark D.G."/>
            <person name="Barrett J.E."/>
            <person name="Nell T.A."/>
        </authorList>
    </citation>
    <scope>NUCLEOTIDE SEQUENCE [MRNA]</scope>
</reference>
<feature type="chain" id="PRO_0000081421" description="Ethylene receptor 2">
    <location>
        <begin position="1"/>
        <end position="741"/>
    </location>
</feature>
<feature type="transmembrane region" description="Helical" evidence="2">
    <location>
        <begin position="23"/>
        <end position="43"/>
    </location>
</feature>
<feature type="transmembrane region" description="Helical" evidence="2">
    <location>
        <begin position="53"/>
        <end position="73"/>
    </location>
</feature>
<feature type="transmembrane region" description="Helical" evidence="2">
    <location>
        <begin position="92"/>
        <end position="112"/>
    </location>
</feature>
<feature type="domain" description="GAF">
    <location>
        <begin position="158"/>
        <end position="307"/>
    </location>
</feature>
<feature type="domain" description="Histidine kinase" evidence="3">
    <location>
        <begin position="350"/>
        <end position="589"/>
    </location>
</feature>
<feature type="domain" description="Response regulatory" evidence="4">
    <location>
        <begin position="615"/>
        <end position="732"/>
    </location>
</feature>
<feature type="binding site" evidence="1">
    <location>
        <position position="65"/>
    </location>
    <ligand>
        <name>Cu cation</name>
        <dbReference type="ChEBI" id="CHEBI:23378"/>
    </ligand>
</feature>
<feature type="binding site" evidence="1">
    <location>
        <position position="69"/>
    </location>
    <ligand>
        <name>Cu cation</name>
        <dbReference type="ChEBI" id="CHEBI:23378"/>
    </ligand>
</feature>
<feature type="modified residue" description="Phosphohistidine; by autocatalysis" evidence="3">
    <location>
        <position position="353"/>
    </location>
</feature>
<feature type="modified residue" description="4-aspartylphosphate" evidence="4">
    <location>
        <position position="663"/>
    </location>
</feature>
<feature type="disulfide bond" description="Interchain" evidence="1">
    <location>
        <position position="4"/>
    </location>
</feature>
<feature type="disulfide bond" description="Interchain" evidence="1">
    <location>
        <position position="6"/>
    </location>
</feature>
<evidence type="ECO:0000250" key="1"/>
<evidence type="ECO:0000255" key="2"/>
<evidence type="ECO:0000255" key="3">
    <source>
        <dbReference type="PROSITE-ProRule" id="PRU00107"/>
    </source>
</evidence>
<evidence type="ECO:0000255" key="4">
    <source>
        <dbReference type="PROSITE-ProRule" id="PRU00169"/>
    </source>
</evidence>
<evidence type="ECO:0000305" key="5"/>